<protein>
    <recommendedName>
        <fullName evidence="1">3-isopropylmalate dehydrogenase</fullName>
        <ecNumber evidence="1">1.1.1.85</ecNumber>
    </recommendedName>
    <alternativeName>
        <fullName evidence="1">3-IPM-DH</fullName>
    </alternativeName>
    <alternativeName>
        <fullName evidence="1">Beta-IPM dehydrogenase</fullName>
        <shortName evidence="1">IMDH</shortName>
    </alternativeName>
</protein>
<accession>Q8YXA2</accession>
<feature type="chain" id="PRO_0000083628" description="3-isopropylmalate dehydrogenase">
    <location>
        <begin position="1"/>
        <end position="362"/>
    </location>
</feature>
<feature type="binding site" evidence="1">
    <location>
        <begin position="78"/>
        <end position="91"/>
    </location>
    <ligand>
        <name>NAD(+)</name>
        <dbReference type="ChEBI" id="CHEBI:57540"/>
    </ligand>
</feature>
<feature type="binding site" evidence="1">
    <location>
        <position position="98"/>
    </location>
    <ligand>
        <name>substrate</name>
    </ligand>
</feature>
<feature type="binding site" evidence="1">
    <location>
        <position position="108"/>
    </location>
    <ligand>
        <name>substrate</name>
    </ligand>
</feature>
<feature type="binding site" evidence="1">
    <location>
        <position position="136"/>
    </location>
    <ligand>
        <name>substrate</name>
    </ligand>
</feature>
<feature type="binding site" evidence="1">
    <location>
        <position position="226"/>
    </location>
    <ligand>
        <name>Mg(2+)</name>
        <dbReference type="ChEBI" id="CHEBI:18420"/>
    </ligand>
</feature>
<feature type="binding site" evidence="1">
    <location>
        <position position="226"/>
    </location>
    <ligand>
        <name>substrate</name>
    </ligand>
</feature>
<feature type="binding site" evidence="1">
    <location>
        <position position="250"/>
    </location>
    <ligand>
        <name>Mg(2+)</name>
        <dbReference type="ChEBI" id="CHEBI:18420"/>
    </ligand>
</feature>
<feature type="binding site" evidence="1">
    <location>
        <position position="254"/>
    </location>
    <ligand>
        <name>Mg(2+)</name>
        <dbReference type="ChEBI" id="CHEBI:18420"/>
    </ligand>
</feature>
<feature type="binding site" evidence="1">
    <location>
        <begin position="284"/>
        <end position="296"/>
    </location>
    <ligand>
        <name>NAD(+)</name>
        <dbReference type="ChEBI" id="CHEBI:57540"/>
    </ligand>
</feature>
<feature type="site" description="Important for catalysis" evidence="1">
    <location>
        <position position="143"/>
    </location>
</feature>
<feature type="site" description="Important for catalysis" evidence="1">
    <location>
        <position position="194"/>
    </location>
</feature>
<dbReference type="EC" id="1.1.1.85" evidence="1"/>
<dbReference type="EMBL" id="BA000019">
    <property type="protein sequence ID" value="BAB73270.1"/>
    <property type="molecule type" value="Genomic_DNA"/>
</dbReference>
<dbReference type="PIR" id="AF1970">
    <property type="entry name" value="AF1970"/>
</dbReference>
<dbReference type="RefSeq" id="WP_010995485.1">
    <property type="nucleotide sequence ID" value="NZ_RSCN01000060.1"/>
</dbReference>
<dbReference type="SMR" id="Q8YXA2"/>
<dbReference type="STRING" id="103690.gene:10493327"/>
<dbReference type="KEGG" id="ana:alr1313"/>
<dbReference type="eggNOG" id="COG0473">
    <property type="taxonomic scope" value="Bacteria"/>
</dbReference>
<dbReference type="OrthoDB" id="9806254at2"/>
<dbReference type="UniPathway" id="UPA00048">
    <property type="reaction ID" value="UER00072"/>
</dbReference>
<dbReference type="Proteomes" id="UP000002483">
    <property type="component" value="Chromosome"/>
</dbReference>
<dbReference type="GO" id="GO:0005829">
    <property type="term" value="C:cytosol"/>
    <property type="evidence" value="ECO:0007669"/>
    <property type="project" value="TreeGrafter"/>
</dbReference>
<dbReference type="GO" id="GO:0003862">
    <property type="term" value="F:3-isopropylmalate dehydrogenase activity"/>
    <property type="evidence" value="ECO:0007669"/>
    <property type="project" value="UniProtKB-UniRule"/>
</dbReference>
<dbReference type="GO" id="GO:0000287">
    <property type="term" value="F:magnesium ion binding"/>
    <property type="evidence" value="ECO:0007669"/>
    <property type="project" value="InterPro"/>
</dbReference>
<dbReference type="GO" id="GO:0051287">
    <property type="term" value="F:NAD binding"/>
    <property type="evidence" value="ECO:0007669"/>
    <property type="project" value="InterPro"/>
</dbReference>
<dbReference type="GO" id="GO:0009098">
    <property type="term" value="P:L-leucine biosynthetic process"/>
    <property type="evidence" value="ECO:0007669"/>
    <property type="project" value="UniProtKB-UniRule"/>
</dbReference>
<dbReference type="FunFam" id="3.40.718.10:FF:000004">
    <property type="entry name" value="3-isopropylmalate dehydrogenase"/>
    <property type="match status" value="1"/>
</dbReference>
<dbReference type="Gene3D" id="3.40.718.10">
    <property type="entry name" value="Isopropylmalate Dehydrogenase"/>
    <property type="match status" value="1"/>
</dbReference>
<dbReference type="HAMAP" id="MF_01033">
    <property type="entry name" value="LeuB_type1"/>
    <property type="match status" value="1"/>
</dbReference>
<dbReference type="InterPro" id="IPR019818">
    <property type="entry name" value="IsoCit/isopropylmalate_DH_CS"/>
</dbReference>
<dbReference type="InterPro" id="IPR024084">
    <property type="entry name" value="IsoPropMal-DH-like_dom"/>
</dbReference>
<dbReference type="InterPro" id="IPR004429">
    <property type="entry name" value="Isopropylmalate_DH"/>
</dbReference>
<dbReference type="NCBIfam" id="TIGR00169">
    <property type="entry name" value="leuB"/>
    <property type="match status" value="1"/>
</dbReference>
<dbReference type="PANTHER" id="PTHR42979">
    <property type="entry name" value="3-ISOPROPYLMALATE DEHYDROGENASE"/>
    <property type="match status" value="1"/>
</dbReference>
<dbReference type="PANTHER" id="PTHR42979:SF1">
    <property type="entry name" value="3-ISOPROPYLMALATE DEHYDROGENASE"/>
    <property type="match status" value="1"/>
</dbReference>
<dbReference type="Pfam" id="PF00180">
    <property type="entry name" value="Iso_dh"/>
    <property type="match status" value="1"/>
</dbReference>
<dbReference type="SMART" id="SM01329">
    <property type="entry name" value="Iso_dh"/>
    <property type="match status" value="1"/>
</dbReference>
<dbReference type="SUPFAM" id="SSF53659">
    <property type="entry name" value="Isocitrate/Isopropylmalate dehydrogenase-like"/>
    <property type="match status" value="1"/>
</dbReference>
<dbReference type="PROSITE" id="PS00470">
    <property type="entry name" value="IDH_IMDH"/>
    <property type="match status" value="1"/>
</dbReference>
<sequence length="362" mass="38769">MTQNYRITLLPGDGIGPEIMAVAVDVLKVVGQQFDIQFDFQEALIGGAAIDATGEPLPSATLDTCRHSDAVLLAAIGGYKWDSLPPHQRPEGGLLGLRAGLELFANLRPAQILPQLIDASTLKREVVEGVDIMVVRELTGGIYFGKPRGIFTTETGEKRGVNTMVYTESEIDRIGRIAFETARKRRGKLCSVDKANVLDVSQLWRDRITNLSQEYPDVELSHLYVDNAAMQLVRAPKQFDTIVTGNLFGDILSDAAAMLTGSIGMLPSASLGASGPGVFEPVHGSAPDIAGQDKANPLAQVLSAAMMLRYALDQPQAADKIEQAVLQVLEQGDRTGDIISVGMNLLGCRGMGDSLIKALAKS</sequence>
<organism>
    <name type="scientific">Nostoc sp. (strain PCC 7120 / SAG 25.82 / UTEX 2576)</name>
    <dbReference type="NCBI Taxonomy" id="103690"/>
    <lineage>
        <taxon>Bacteria</taxon>
        <taxon>Bacillati</taxon>
        <taxon>Cyanobacteriota</taxon>
        <taxon>Cyanophyceae</taxon>
        <taxon>Nostocales</taxon>
        <taxon>Nostocaceae</taxon>
        <taxon>Nostoc</taxon>
    </lineage>
</organism>
<evidence type="ECO:0000255" key="1">
    <source>
        <dbReference type="HAMAP-Rule" id="MF_01033"/>
    </source>
</evidence>
<keyword id="KW-0028">Amino-acid biosynthesis</keyword>
<keyword id="KW-0100">Branched-chain amino acid biosynthesis</keyword>
<keyword id="KW-0963">Cytoplasm</keyword>
<keyword id="KW-0432">Leucine biosynthesis</keyword>
<keyword id="KW-0460">Magnesium</keyword>
<keyword id="KW-0464">Manganese</keyword>
<keyword id="KW-0479">Metal-binding</keyword>
<keyword id="KW-0520">NAD</keyword>
<keyword id="KW-0560">Oxidoreductase</keyword>
<keyword id="KW-1185">Reference proteome</keyword>
<reference key="1">
    <citation type="journal article" date="2001" name="DNA Res.">
        <title>Complete genomic sequence of the filamentous nitrogen-fixing cyanobacterium Anabaena sp. strain PCC 7120.</title>
        <authorList>
            <person name="Kaneko T."/>
            <person name="Nakamura Y."/>
            <person name="Wolk C.P."/>
            <person name="Kuritz T."/>
            <person name="Sasamoto S."/>
            <person name="Watanabe A."/>
            <person name="Iriguchi M."/>
            <person name="Ishikawa A."/>
            <person name="Kawashima K."/>
            <person name="Kimura T."/>
            <person name="Kishida Y."/>
            <person name="Kohara M."/>
            <person name="Matsumoto M."/>
            <person name="Matsuno A."/>
            <person name="Muraki A."/>
            <person name="Nakazaki N."/>
            <person name="Shimpo S."/>
            <person name="Sugimoto M."/>
            <person name="Takazawa M."/>
            <person name="Yamada M."/>
            <person name="Yasuda M."/>
            <person name="Tabata S."/>
        </authorList>
    </citation>
    <scope>NUCLEOTIDE SEQUENCE [LARGE SCALE GENOMIC DNA]</scope>
    <source>
        <strain>PCC 7120 / SAG 25.82 / UTEX 2576</strain>
    </source>
</reference>
<name>LEU3_NOSS1</name>
<proteinExistence type="inferred from homology"/>
<gene>
    <name evidence="1" type="primary">leuB</name>
    <name type="ordered locus">alr1313</name>
</gene>
<comment type="function">
    <text evidence="1">Catalyzes the oxidation of 3-carboxy-2-hydroxy-4-methylpentanoate (3-isopropylmalate) to 3-carboxy-4-methyl-2-oxopentanoate. The product decarboxylates to 4-methyl-2 oxopentanoate.</text>
</comment>
<comment type="catalytic activity">
    <reaction evidence="1">
        <text>(2R,3S)-3-isopropylmalate + NAD(+) = 4-methyl-2-oxopentanoate + CO2 + NADH</text>
        <dbReference type="Rhea" id="RHEA:32271"/>
        <dbReference type="ChEBI" id="CHEBI:16526"/>
        <dbReference type="ChEBI" id="CHEBI:17865"/>
        <dbReference type="ChEBI" id="CHEBI:35121"/>
        <dbReference type="ChEBI" id="CHEBI:57540"/>
        <dbReference type="ChEBI" id="CHEBI:57945"/>
        <dbReference type="EC" id="1.1.1.85"/>
    </reaction>
</comment>
<comment type="cofactor">
    <cofactor evidence="1">
        <name>Mg(2+)</name>
        <dbReference type="ChEBI" id="CHEBI:18420"/>
    </cofactor>
    <cofactor evidence="1">
        <name>Mn(2+)</name>
        <dbReference type="ChEBI" id="CHEBI:29035"/>
    </cofactor>
    <text evidence="1">Binds 1 Mg(2+) or Mn(2+) ion per subunit.</text>
</comment>
<comment type="pathway">
    <text evidence="1">Amino-acid biosynthesis; L-leucine biosynthesis; L-leucine from 3-methyl-2-oxobutanoate: step 3/4.</text>
</comment>
<comment type="subunit">
    <text evidence="1">Homodimer.</text>
</comment>
<comment type="subcellular location">
    <subcellularLocation>
        <location evidence="1">Cytoplasm</location>
    </subcellularLocation>
</comment>
<comment type="similarity">
    <text evidence="1">Belongs to the isocitrate and isopropylmalate dehydrogenases family. LeuB type 1 subfamily.</text>
</comment>